<dbReference type="InParanoid" id="P38642"/>
<dbReference type="Proteomes" id="UP000000589">
    <property type="component" value="Unplaced"/>
</dbReference>
<reference key="1">
    <citation type="journal article" date="1994" name="Electrophoresis">
        <title>Separation and sequencing of familiar and novel murine proteins using preparative two-dimensional gel electrophoresis.</title>
        <authorList>
            <person name="Merrick B.A."/>
            <person name="Patterson R.M."/>
            <person name="Wichter L.L."/>
            <person name="He C."/>
            <person name="Selkirk J.K."/>
        </authorList>
    </citation>
    <scope>PROTEIN SEQUENCE</scope>
    <source>
        <tissue>Fibroblast</tissue>
    </source>
</reference>
<keyword id="KW-0903">Direct protein sequencing</keyword>
<keyword id="KW-1185">Reference proteome</keyword>
<protein>
    <recommendedName>
        <fullName>Unknown protein from 2D-PAGE of fibroblasts</fullName>
    </recommendedName>
    <alternativeName>
        <fullName>P46</fullName>
    </alternativeName>
</protein>
<proteinExistence type="evidence at protein level"/>
<sequence>PKPPDRG</sequence>
<organism>
    <name type="scientific">Mus musculus</name>
    <name type="common">Mouse</name>
    <dbReference type="NCBI Taxonomy" id="10090"/>
    <lineage>
        <taxon>Eukaryota</taxon>
        <taxon>Metazoa</taxon>
        <taxon>Chordata</taxon>
        <taxon>Craniata</taxon>
        <taxon>Vertebrata</taxon>
        <taxon>Euteleostomi</taxon>
        <taxon>Mammalia</taxon>
        <taxon>Eutheria</taxon>
        <taxon>Euarchontoglires</taxon>
        <taxon>Glires</taxon>
        <taxon>Rodentia</taxon>
        <taxon>Myomorpha</taxon>
        <taxon>Muroidea</taxon>
        <taxon>Muridae</taxon>
        <taxon>Murinae</taxon>
        <taxon>Mus</taxon>
        <taxon>Mus</taxon>
    </lineage>
</organism>
<name>UF04_MOUSE</name>
<feature type="chain" id="PRO_0000055550" description="Unknown protein from 2D-PAGE of fibroblasts">
    <location>
        <begin position="1"/>
        <end position="7" status="greater than"/>
    </location>
</feature>
<feature type="non-terminal residue">
    <location>
        <position position="7"/>
    </location>
</feature>
<accession>P38642</accession>
<comment type="miscellaneous">
    <text>On the 2D-gel the determined pI of this unknown protein is: 5.0, its MW is: 46 kDa.</text>
</comment>